<keyword id="KW-1185">Reference proteome</keyword>
<sequence>MAEDKIEAYNKSITRTKYFKMDDAINSPICSKTVFIIANERITKENRIGRYYTVFPSFKKFLKKRDSYPQCHEIIIDHINNKTNIAGRLVFDFDIKITDSSILKDTGLIDKNDNQPIMFNSKTLSITKIPLNFKQQIENTIIETIDQYFHDIDKTILEFIWSTSQNPNKFSKHLTVKNLYFDDWITMSKLFYKLFCKVWDNQYYWISSKDLVDSQIVRNKGSLRMVGSTKINGYPLVFDNKNHTLPDSLIRIYFRNHREKEQLVTRNNINKDIINQFLESNDDIEHHRSIDIIDRHFTKIRNPSYDPIIYQKAFEIYDAIHPNIFKMGKVNGKYLTLIRLKPHTCFLSNKFHEQENAYLYISMSDTTYKISFGCYRFCSKKKMEYLGSLIQGNLMKNSPYIDDTDGTTKKHDFNINIKFLSDSDDESINAPNNIKSLESIKSSKSKKQLKSSKSKKPIKHTKTKNIYVET</sequence>
<organism>
    <name type="scientific">Acanthamoeba polyphaga mimivirus</name>
    <name type="common">APMV</name>
    <dbReference type="NCBI Taxonomy" id="212035"/>
    <lineage>
        <taxon>Viruses</taxon>
        <taxon>Varidnaviria</taxon>
        <taxon>Bamfordvirae</taxon>
        <taxon>Nucleocytoviricota</taxon>
        <taxon>Megaviricetes</taxon>
        <taxon>Imitervirales</taxon>
        <taxon>Mimiviridae</taxon>
        <taxon>Megamimivirinae</taxon>
        <taxon>Mimivirus</taxon>
        <taxon>Mimivirus bradfordmassiliense</taxon>
    </lineage>
</organism>
<name>YL537_MIMIV</name>
<protein>
    <recommendedName>
        <fullName>Uncharacterized protein L537</fullName>
    </recommendedName>
</protein>
<feature type="chain" id="PRO_0000251121" description="Uncharacterized protein L537">
    <location>
        <begin position="1"/>
        <end position="470"/>
    </location>
</feature>
<feature type="region of interest" description="Disordered" evidence="1">
    <location>
        <begin position="439"/>
        <end position="470"/>
    </location>
</feature>
<feature type="compositionally biased region" description="Basic residues" evidence="1">
    <location>
        <begin position="443"/>
        <end position="463"/>
    </location>
</feature>
<proteinExistence type="predicted"/>
<gene>
    <name type="ordered locus">MIMI_L537</name>
</gene>
<accession>Q5UQ99</accession>
<reference key="1">
    <citation type="journal article" date="2004" name="Science">
        <title>The 1.2-megabase genome sequence of Mimivirus.</title>
        <authorList>
            <person name="Raoult D."/>
            <person name="Audic S."/>
            <person name="Robert C."/>
            <person name="Abergel C."/>
            <person name="Renesto P."/>
            <person name="Ogata H."/>
            <person name="La Scola B."/>
            <person name="Susan M."/>
            <person name="Claverie J.-M."/>
        </authorList>
    </citation>
    <scope>NUCLEOTIDE SEQUENCE [LARGE SCALE GENOMIC DNA]</scope>
    <source>
        <strain>Rowbotham-Bradford</strain>
    </source>
</reference>
<organismHost>
    <name type="scientific">Acanthamoeba polyphaga</name>
    <name type="common">Amoeba</name>
    <dbReference type="NCBI Taxonomy" id="5757"/>
</organismHost>
<evidence type="ECO:0000256" key="1">
    <source>
        <dbReference type="SAM" id="MobiDB-lite"/>
    </source>
</evidence>
<dbReference type="EMBL" id="AY653733">
    <property type="protein sequence ID" value="AAV50801.1"/>
    <property type="molecule type" value="Genomic_DNA"/>
</dbReference>
<dbReference type="Proteomes" id="UP000001134">
    <property type="component" value="Genome"/>
</dbReference>